<dbReference type="EMBL" id="CP001175">
    <property type="protein sequence ID" value="ACK41066.1"/>
    <property type="molecule type" value="Genomic_DNA"/>
</dbReference>
<dbReference type="RefSeq" id="WP_003728664.1">
    <property type="nucleotide sequence ID" value="NC_011660.1"/>
</dbReference>
<dbReference type="SMR" id="B8DD20"/>
<dbReference type="KEGG" id="lmh:LMHCC_2731"/>
<dbReference type="HOGENOM" id="CLU_023853_0_1_9"/>
<dbReference type="GO" id="GO:0005694">
    <property type="term" value="C:chromosome"/>
    <property type="evidence" value="ECO:0007669"/>
    <property type="project" value="TreeGrafter"/>
</dbReference>
<dbReference type="GO" id="GO:0005737">
    <property type="term" value="C:cytoplasm"/>
    <property type="evidence" value="ECO:0007669"/>
    <property type="project" value="UniProtKB-UniRule"/>
</dbReference>
<dbReference type="GO" id="GO:0009295">
    <property type="term" value="C:nucleoid"/>
    <property type="evidence" value="ECO:0007669"/>
    <property type="project" value="UniProtKB-SubCell"/>
</dbReference>
<dbReference type="GO" id="GO:0003677">
    <property type="term" value="F:DNA binding"/>
    <property type="evidence" value="ECO:0007669"/>
    <property type="project" value="UniProtKB-UniRule"/>
</dbReference>
<dbReference type="GO" id="GO:0007059">
    <property type="term" value="P:chromosome segregation"/>
    <property type="evidence" value="ECO:0007669"/>
    <property type="project" value="TreeGrafter"/>
</dbReference>
<dbReference type="GO" id="GO:0000917">
    <property type="term" value="P:division septum assembly"/>
    <property type="evidence" value="ECO:0007669"/>
    <property type="project" value="UniProtKB-KW"/>
</dbReference>
<dbReference type="GO" id="GO:0045881">
    <property type="term" value="P:positive regulation of sporulation resulting in formation of a cellular spore"/>
    <property type="evidence" value="ECO:0007669"/>
    <property type="project" value="TreeGrafter"/>
</dbReference>
<dbReference type="CDD" id="cd16393">
    <property type="entry name" value="SPO0J_N"/>
    <property type="match status" value="1"/>
</dbReference>
<dbReference type="FunFam" id="1.10.10.2830:FF:000001">
    <property type="entry name" value="Chromosome partitioning protein ParB"/>
    <property type="match status" value="1"/>
</dbReference>
<dbReference type="FunFam" id="3.90.1530.30:FF:000001">
    <property type="entry name" value="Chromosome partitioning protein ParB"/>
    <property type="match status" value="1"/>
</dbReference>
<dbReference type="Gene3D" id="1.10.10.2830">
    <property type="match status" value="1"/>
</dbReference>
<dbReference type="Gene3D" id="3.90.1530.30">
    <property type="match status" value="1"/>
</dbReference>
<dbReference type="HAMAP" id="MF_02015">
    <property type="entry name" value="ParB_Noc"/>
    <property type="match status" value="1"/>
</dbReference>
<dbReference type="InterPro" id="IPR050336">
    <property type="entry name" value="Chromosome_partition/occlusion"/>
</dbReference>
<dbReference type="InterPro" id="IPR041468">
    <property type="entry name" value="HTH_ParB/Spo0J"/>
</dbReference>
<dbReference type="InterPro" id="IPR023705">
    <property type="entry name" value="Nucleoid_occlusion_protein"/>
</dbReference>
<dbReference type="InterPro" id="IPR004437">
    <property type="entry name" value="ParB/RepB/Spo0J"/>
</dbReference>
<dbReference type="InterPro" id="IPR003115">
    <property type="entry name" value="ParB/Sulfiredoxin_dom"/>
</dbReference>
<dbReference type="InterPro" id="IPR036086">
    <property type="entry name" value="ParB/Sulfiredoxin_sf"/>
</dbReference>
<dbReference type="NCBIfam" id="TIGR04285">
    <property type="entry name" value="nucleoid_noc"/>
    <property type="match status" value="1"/>
</dbReference>
<dbReference type="NCBIfam" id="TIGR00180">
    <property type="entry name" value="parB_part"/>
    <property type="match status" value="1"/>
</dbReference>
<dbReference type="PANTHER" id="PTHR33375">
    <property type="entry name" value="CHROMOSOME-PARTITIONING PROTEIN PARB-RELATED"/>
    <property type="match status" value="1"/>
</dbReference>
<dbReference type="PANTHER" id="PTHR33375:SF8">
    <property type="entry name" value="NUCLEOID OCCLUSION PROTEIN"/>
    <property type="match status" value="1"/>
</dbReference>
<dbReference type="Pfam" id="PF17762">
    <property type="entry name" value="HTH_ParB"/>
    <property type="match status" value="1"/>
</dbReference>
<dbReference type="Pfam" id="PF02195">
    <property type="entry name" value="ParBc"/>
    <property type="match status" value="1"/>
</dbReference>
<dbReference type="SMART" id="SM00470">
    <property type="entry name" value="ParB"/>
    <property type="match status" value="1"/>
</dbReference>
<dbReference type="SUPFAM" id="SSF109709">
    <property type="entry name" value="KorB DNA-binding domain-like"/>
    <property type="match status" value="1"/>
</dbReference>
<dbReference type="SUPFAM" id="SSF110849">
    <property type="entry name" value="ParB/Sulfiredoxin"/>
    <property type="match status" value="1"/>
</dbReference>
<comment type="function">
    <text evidence="1">Effects nucleoid occlusion by binding relatively nonspecifically to DNA and preventing the assembly of the division machinery in the vicinity of the nucleoid, especially under conditions that disturb the cell cycle. It helps to coordinate cell division and chromosome segregation by preventing the formation of the Z ring through the nucleoid, which would cause chromosome breakage.</text>
</comment>
<comment type="subcellular location">
    <subcellularLocation>
        <location evidence="1">Cytoplasm</location>
        <location evidence="1">Nucleoid</location>
    </subcellularLocation>
</comment>
<comment type="similarity">
    <text evidence="1">Belongs to the ParB family.</text>
</comment>
<feature type="chain" id="PRO_1000189535" description="Nucleoid occlusion protein">
    <location>
        <begin position="1"/>
        <end position="287"/>
    </location>
</feature>
<feature type="DNA-binding region" description="H-T-H motif" evidence="1">
    <location>
        <begin position="146"/>
        <end position="165"/>
    </location>
</feature>
<accession>B8DD20</accession>
<sequence>MPFSRLFGKKEKNQMDDIDNIVEEGVQRVQELPMDKIFPNQFQPRTVFDQDKIDELARTIRIHGVIQPIVVREMEPDYYEIIAGERRFRAVLSLEMEKIPAIIQNLDDEEVAAIALIENLQREELTPIEEAKAYRSLLDMQEVTQEALAQRVGKSQSAIANKMRLLKLPETVQEAVLNKQISERHARSLLALETEEQQVALLAEIAENHWNVKQTEARIQEILGVKKPVATKKTKPKRQAISRDVRIAMNTIKQSVTMVKDNGMDLDFTEEETDDFYQITIQIPKKK</sequence>
<name>NOC_LISMH</name>
<evidence type="ECO:0000255" key="1">
    <source>
        <dbReference type="HAMAP-Rule" id="MF_02015"/>
    </source>
</evidence>
<protein>
    <recommendedName>
        <fullName evidence="1">Nucleoid occlusion protein</fullName>
        <shortName evidence="1">Noc</shortName>
    </recommendedName>
</protein>
<proteinExistence type="inferred from homology"/>
<gene>
    <name evidence="1" type="primary">noc</name>
    <name type="ordered locus">LMHCC_2731</name>
</gene>
<keyword id="KW-0131">Cell cycle</keyword>
<keyword id="KW-0132">Cell division</keyword>
<keyword id="KW-0963">Cytoplasm</keyword>
<keyword id="KW-0238">DNA-binding</keyword>
<keyword id="KW-0717">Septation</keyword>
<reference key="1">
    <citation type="journal article" date="2011" name="J. Bacteriol.">
        <title>Genome sequence of lineage III Listeria monocytogenes strain HCC23.</title>
        <authorList>
            <person name="Steele C.L."/>
            <person name="Donaldson J.R."/>
            <person name="Paul D."/>
            <person name="Banes M.M."/>
            <person name="Arick T."/>
            <person name="Bridges S.M."/>
            <person name="Lawrence M.L."/>
        </authorList>
    </citation>
    <scope>NUCLEOTIDE SEQUENCE [LARGE SCALE GENOMIC DNA]</scope>
    <source>
        <strain>HCC23</strain>
    </source>
</reference>
<organism>
    <name type="scientific">Listeria monocytogenes serotype 4a (strain HCC23)</name>
    <dbReference type="NCBI Taxonomy" id="552536"/>
    <lineage>
        <taxon>Bacteria</taxon>
        <taxon>Bacillati</taxon>
        <taxon>Bacillota</taxon>
        <taxon>Bacilli</taxon>
        <taxon>Bacillales</taxon>
        <taxon>Listeriaceae</taxon>
        <taxon>Listeria</taxon>
    </lineage>
</organism>